<dbReference type="EC" id="2.3.1.47"/>
<dbReference type="EMBL" id="CP000717">
    <property type="protein sequence ID" value="ABR05944.1"/>
    <property type="molecule type" value="Genomic_DNA"/>
</dbReference>
<dbReference type="RefSeq" id="WP_003407805.1">
    <property type="nucleotide sequence ID" value="NZ_KK339377.1"/>
</dbReference>
<dbReference type="SMR" id="A5WMQ5"/>
<dbReference type="KEGG" id="mtf:TBFG_11601"/>
<dbReference type="PATRIC" id="fig|336982.11.peg.1748"/>
<dbReference type="HOGENOM" id="CLU_015846_11_2_11"/>
<dbReference type="UniPathway" id="UPA00078"/>
<dbReference type="GO" id="GO:0008710">
    <property type="term" value="F:8-amino-7-oxononanoate synthase activity"/>
    <property type="evidence" value="ECO:0007669"/>
    <property type="project" value="UniProtKB-EC"/>
</dbReference>
<dbReference type="GO" id="GO:0030170">
    <property type="term" value="F:pyridoxal phosphate binding"/>
    <property type="evidence" value="ECO:0007669"/>
    <property type="project" value="InterPro"/>
</dbReference>
<dbReference type="GO" id="GO:0009102">
    <property type="term" value="P:biotin biosynthetic process"/>
    <property type="evidence" value="ECO:0007669"/>
    <property type="project" value="UniProtKB-UniPathway"/>
</dbReference>
<dbReference type="FunFam" id="3.40.640.10:FF:000130">
    <property type="entry name" value="8-amino-7-oxononanoate synthase"/>
    <property type="match status" value="1"/>
</dbReference>
<dbReference type="Gene3D" id="3.90.1150.10">
    <property type="entry name" value="Aspartate Aminotransferase, domain 1"/>
    <property type="match status" value="1"/>
</dbReference>
<dbReference type="Gene3D" id="3.40.640.10">
    <property type="entry name" value="Type I PLP-dependent aspartate aminotransferase-like (Major domain)"/>
    <property type="match status" value="1"/>
</dbReference>
<dbReference type="InterPro" id="IPR001917">
    <property type="entry name" value="Aminotrans_II_pyridoxalP_BS"/>
</dbReference>
<dbReference type="InterPro" id="IPR004839">
    <property type="entry name" value="Aminotransferase_I/II_large"/>
</dbReference>
<dbReference type="InterPro" id="IPR050087">
    <property type="entry name" value="AON_synthase_class-II"/>
</dbReference>
<dbReference type="InterPro" id="IPR015424">
    <property type="entry name" value="PyrdxlP-dep_Trfase"/>
</dbReference>
<dbReference type="InterPro" id="IPR015421">
    <property type="entry name" value="PyrdxlP-dep_Trfase_major"/>
</dbReference>
<dbReference type="InterPro" id="IPR015422">
    <property type="entry name" value="PyrdxlP-dep_Trfase_small"/>
</dbReference>
<dbReference type="PANTHER" id="PTHR13693:SF100">
    <property type="entry name" value="8-AMINO-7-OXONONANOATE SYNTHASE"/>
    <property type="match status" value="1"/>
</dbReference>
<dbReference type="PANTHER" id="PTHR13693">
    <property type="entry name" value="CLASS II AMINOTRANSFERASE/8-AMINO-7-OXONONANOATE SYNTHASE"/>
    <property type="match status" value="1"/>
</dbReference>
<dbReference type="Pfam" id="PF00155">
    <property type="entry name" value="Aminotran_1_2"/>
    <property type="match status" value="1"/>
</dbReference>
<dbReference type="SUPFAM" id="SSF53383">
    <property type="entry name" value="PLP-dependent transferases"/>
    <property type="match status" value="1"/>
</dbReference>
<dbReference type="PROSITE" id="PS00599">
    <property type="entry name" value="AA_TRANSFER_CLASS_2"/>
    <property type="match status" value="1"/>
</dbReference>
<name>BIOF_MYCTF</name>
<accession>A5WMQ5</accession>
<keyword id="KW-0012">Acyltransferase</keyword>
<keyword id="KW-0093">Biotin biosynthesis</keyword>
<keyword id="KW-0663">Pyridoxal phosphate</keyword>
<keyword id="KW-0808">Transferase</keyword>
<sequence>MKAATQARIDDSPLAWLDAVQRQRHEAGLRRCLRPRPAVATELDLASNDYLGLSRHPAVIDGGVQALRIWGAGATGSRLVTGDTKLHQQFEAELAEFVGAAAGLLFSSGYTANLGAVVGLSGPGSLLVSDARSHASLVDACRLSRARVVVTPHRDVDAVDAALRSRDEQRAVVVTDSVFSADGSLAPVRELLEVCRRHGALLLVDEAHGLGVRGGGRGLLYELGLAGAPDVVMTTTLSKALGSQGGVVLGPTPVRAHLIDAARPFIFDTGLAPAAVGAARAALRVLQAEPWRPQAVLNHAGELARMCGVAAVPDSAMVSVILGEPESAVAAAAACLDAGVKVGCFRPPTVPAGTSRLRLTARASLNAGELELARRVLTDVLAVARR</sequence>
<gene>
    <name type="ordered locus">TBFG_11601</name>
</gene>
<evidence type="ECO:0000250" key="1"/>
<evidence type="ECO:0000305" key="2"/>
<reference key="1">
    <citation type="submission" date="2007-04" db="EMBL/GenBank/DDBJ databases">
        <title>The complete genome sequence of Mycobacterium tuberculosis F11.</title>
        <authorList>
            <person name="Birren B."/>
            <person name="Lander E."/>
            <person name="Galagan J."/>
            <person name="Devon K."/>
            <person name="Nusbaum C."/>
            <person name="Borowsky M.L."/>
            <person name="Grabherr M."/>
            <person name="Mauceli E."/>
            <person name="Brockman W."/>
            <person name="Young S."/>
            <person name="LaButti K."/>
            <person name="Pushparaj V."/>
            <person name="Sykes S."/>
            <person name="Baldwin J."/>
            <person name="Fitzgerald M."/>
            <person name="Bloom T."/>
            <person name="Zimmer A."/>
            <person name="Settipalli S."/>
            <person name="Shea T."/>
            <person name="Arachchi H."/>
            <person name="Macdonald P."/>
            <person name="Abouelleil A."/>
            <person name="Lui A."/>
            <person name="Priest M."/>
            <person name="Berlin A."/>
            <person name="Gearin G."/>
            <person name="Brown A."/>
            <person name="Aftuck L."/>
            <person name="Bessette D."/>
            <person name="Allen N."/>
            <person name="Lubonja R."/>
            <person name="Lokyitsang T."/>
            <person name="Matthews C."/>
            <person name="Dunbar C."/>
            <person name="Benamara M."/>
            <person name="Nguyen T."/>
            <person name="Negash T."/>
            <person name="DeCaprio D."/>
            <person name="Crawford M."/>
            <person name="Koehrsen M."/>
            <person name="Engels R."/>
            <person name="Montgomery P."/>
            <person name="Pearson M."/>
            <person name="Howarth C."/>
            <person name="Kodira C."/>
            <person name="Zeng Q."/>
            <person name="Yandava C."/>
            <person name="O'Leary S."/>
            <person name="Alvarado L."/>
            <person name="Victor T."/>
            <person name="Murray M."/>
        </authorList>
    </citation>
    <scope>NUCLEOTIDE SEQUENCE [LARGE SCALE GENOMIC DNA]</scope>
    <source>
        <strain>F11</strain>
    </source>
</reference>
<comment type="function">
    <text evidence="1">Catalyzes the decarboxylative condensation of pimeloyl-[acyl-carrier protein] and L-alanine to produce 8-amino-7-oxononanoate (AON), [acyl-carrier protein], and carbon dioxide.</text>
</comment>
<comment type="catalytic activity">
    <reaction>
        <text>6-carboxyhexanoyl-[ACP] + L-alanine + H(+) = (8S)-8-amino-7-oxononanoate + holo-[ACP] + CO2</text>
        <dbReference type="Rhea" id="RHEA:42288"/>
        <dbReference type="Rhea" id="RHEA-COMP:9685"/>
        <dbReference type="Rhea" id="RHEA-COMP:9955"/>
        <dbReference type="ChEBI" id="CHEBI:15378"/>
        <dbReference type="ChEBI" id="CHEBI:16526"/>
        <dbReference type="ChEBI" id="CHEBI:57972"/>
        <dbReference type="ChEBI" id="CHEBI:64479"/>
        <dbReference type="ChEBI" id="CHEBI:78846"/>
        <dbReference type="ChEBI" id="CHEBI:149468"/>
        <dbReference type="EC" id="2.3.1.47"/>
    </reaction>
</comment>
<comment type="cofactor">
    <cofactor evidence="1">
        <name>pyridoxal 5'-phosphate</name>
        <dbReference type="ChEBI" id="CHEBI:597326"/>
    </cofactor>
</comment>
<comment type="pathway">
    <text>Cofactor biosynthesis; biotin biosynthesis.</text>
</comment>
<comment type="subunit">
    <text evidence="1">Homodimer.</text>
</comment>
<comment type="similarity">
    <text evidence="2">Belongs to the class-II pyridoxal-phosphate-dependent aminotransferase family. BioF subfamily.</text>
</comment>
<protein>
    <recommendedName>
        <fullName>8-amino-7-oxononanoate synthase</fullName>
        <shortName>AONS</shortName>
        <ecNumber>2.3.1.47</ecNumber>
    </recommendedName>
    <alternativeName>
        <fullName>7-keto-8-amino-pelargonic acid synthase</fullName>
        <shortName>7-KAP synthase</shortName>
        <shortName>KAPA synthase</shortName>
    </alternativeName>
    <alternativeName>
        <fullName>8-amino-7-ketopelargonate synthase</fullName>
    </alternativeName>
    <alternativeName>
        <fullName>Alpha-oxoamine synthase</fullName>
    </alternativeName>
</protein>
<feature type="chain" id="PRO_0000381044" description="8-amino-7-oxononanoate synthase">
    <location>
        <begin position="1"/>
        <end position="386"/>
    </location>
</feature>
<feature type="binding site" evidence="1">
    <location>
        <position position="31"/>
    </location>
    <ligand>
        <name>substrate</name>
    </ligand>
</feature>
<feature type="binding site" evidence="1">
    <location>
        <begin position="109"/>
        <end position="110"/>
    </location>
    <ligand>
        <name>pyridoxal 5'-phosphate</name>
        <dbReference type="ChEBI" id="CHEBI:597326"/>
    </ligand>
</feature>
<feature type="binding site" evidence="1">
    <location>
        <position position="134"/>
    </location>
    <ligand>
        <name>substrate</name>
    </ligand>
</feature>
<feature type="binding site" evidence="1">
    <location>
        <position position="180"/>
    </location>
    <ligand>
        <name>pyridoxal 5'-phosphate</name>
        <dbReference type="ChEBI" id="CHEBI:597326"/>
    </ligand>
</feature>
<feature type="binding site" evidence="1">
    <location>
        <begin position="205"/>
        <end position="208"/>
    </location>
    <ligand>
        <name>pyridoxal 5'-phosphate</name>
        <dbReference type="ChEBI" id="CHEBI:597326"/>
    </ligand>
</feature>
<feature type="binding site" evidence="1">
    <location>
        <begin position="236"/>
        <end position="239"/>
    </location>
    <ligand>
        <name>pyridoxal 5'-phosphate</name>
        <dbReference type="ChEBI" id="CHEBI:597326"/>
    </ligand>
</feature>
<feature type="binding site" evidence="1">
    <location>
        <position position="349"/>
    </location>
    <ligand>
        <name>substrate</name>
    </ligand>
</feature>
<feature type="modified residue" description="N6-(pyridoxal phosphate)lysine" evidence="1">
    <location>
        <position position="239"/>
    </location>
</feature>
<proteinExistence type="inferred from homology"/>
<organism>
    <name type="scientific">Mycobacterium tuberculosis (strain F11)</name>
    <dbReference type="NCBI Taxonomy" id="336982"/>
    <lineage>
        <taxon>Bacteria</taxon>
        <taxon>Bacillati</taxon>
        <taxon>Actinomycetota</taxon>
        <taxon>Actinomycetes</taxon>
        <taxon>Mycobacteriales</taxon>
        <taxon>Mycobacteriaceae</taxon>
        <taxon>Mycobacterium</taxon>
        <taxon>Mycobacterium tuberculosis complex</taxon>
    </lineage>
</organism>